<protein>
    <recommendedName>
        <fullName>Melanopsin</fullName>
    </recommendedName>
    <alternativeName>
        <fullName>Opsin-4</fullName>
    </alternativeName>
    <alternativeName>
        <fullName>amphi-MOP</fullName>
    </alternativeName>
</protein>
<sequence length="706" mass="76779">MTEIPSFQPPINATEVEEENAVFPTALTEWFSEVGNQVGEVALKLLSGEGDGMEVTPTPGCTGNGSVCNGTDSGGVVWDIPPLAHYIVGTAVFCIGCCGMFGNAVVVYSFIKSKGLRTPANFFIINLALSDFLMNLTNMPIFAVNSAFQRWLLSDFACELYGFAGGLFGCLSINTLMAISMDRYLVITKPFLVMRIVTKQRVMFAILLLWIWSLVWALPPLFGWSAYVSEGFGTSCTFDYMTPKLSYHIFTYIIFFTMYFIPGGVMIYCYYNIFATVKSGDKQFGKAVKEMAHEDVKNKAQQERQRKNEIKTAKIAFIVISLFMSAWTPYAVVSALGTLGYQDLVTPYLQSIPAMFAKSSAVYSPIVYAITYPKFREAVKKHIPCLSGCLPASEEETKTKTRGQSSASASMSMTQTTAPVHDPQASVDSGSSVSVDDSSGVSRQDTMMVKVEVDKRMEKAGGGAADAAPQEGASVSTVSAQIEVRPSGKVTTKADVISTPQTAHGLSASPVPKVAELGSSATLESAAIPGKIPTPLPSQPIAAPIERHMAAMADEPPPKPRGVATTVNVRRTESGYDRSQDSQRKKVVGDTHRSRSFNTTKDHFASEQPAALIQPKELYSDDTTKKMARQSSEKHEYDNPAFDEGITEVDTDSENETEGSYDMLSVRFQAMAEEPPVETYRKASDLAINLGKASLMLSEAHDETVL</sequence>
<gene>
    <name evidence="2" type="primary">OPN4</name>
    <name evidence="9" type="synonym">MOP</name>
</gene>
<organism>
    <name type="scientific">Branchiostoma belcheri</name>
    <name type="common">Amphioxus</name>
    <dbReference type="NCBI Taxonomy" id="7741"/>
    <lineage>
        <taxon>Eukaryota</taxon>
        <taxon>Metazoa</taxon>
        <taxon>Chordata</taxon>
        <taxon>Cephalochordata</taxon>
        <taxon>Leptocardii</taxon>
        <taxon>Amphioxiformes</taxon>
        <taxon>Branchiostomatidae</taxon>
        <taxon>Branchiostoma</taxon>
    </lineage>
</organism>
<evidence type="ECO:0000250" key="1"/>
<evidence type="ECO:0000250" key="2">
    <source>
        <dbReference type="UniProtKB" id="Q1JPS6"/>
    </source>
</evidence>
<evidence type="ECO:0000250" key="3">
    <source>
        <dbReference type="UniProtKB" id="Q9QXZ9"/>
    </source>
</evidence>
<evidence type="ECO:0000255" key="4"/>
<evidence type="ECO:0000255" key="5">
    <source>
        <dbReference type="PROSITE-ProRule" id="PRU00521"/>
    </source>
</evidence>
<evidence type="ECO:0000256" key="6">
    <source>
        <dbReference type="SAM" id="MobiDB-lite"/>
    </source>
</evidence>
<evidence type="ECO:0000269" key="7">
    <source>
    </source>
</evidence>
<evidence type="ECO:0000305" key="8"/>
<evidence type="ECO:0000312" key="9">
    <source>
        <dbReference type="EMBL" id="BAE00065.1"/>
    </source>
</evidence>
<name>OPN4_BRABE</name>
<dbReference type="EMBL" id="AB205400">
    <property type="protein sequence ID" value="BAE00065.1"/>
    <property type="molecule type" value="mRNA"/>
</dbReference>
<dbReference type="SMR" id="Q4R1I4"/>
<dbReference type="GlyCosmos" id="Q4R1I4">
    <property type="glycosylation" value="3 sites, No reported glycans"/>
</dbReference>
<dbReference type="Proteomes" id="UP000515135">
    <property type="component" value="Unplaced"/>
</dbReference>
<dbReference type="GO" id="GO:0016020">
    <property type="term" value="C:membrane"/>
    <property type="evidence" value="ECO:0000314"/>
    <property type="project" value="UniProtKB"/>
</dbReference>
<dbReference type="GO" id="GO:0005886">
    <property type="term" value="C:plasma membrane"/>
    <property type="evidence" value="ECO:0000250"/>
    <property type="project" value="UniProtKB"/>
</dbReference>
<dbReference type="GO" id="GO:0008020">
    <property type="term" value="F:G protein-coupled photoreceptor activity"/>
    <property type="evidence" value="ECO:0000314"/>
    <property type="project" value="UniProtKB"/>
</dbReference>
<dbReference type="GO" id="GO:0007186">
    <property type="term" value="P:G protein-coupled receptor signaling pathway"/>
    <property type="evidence" value="ECO:0000314"/>
    <property type="project" value="UniProtKB"/>
</dbReference>
<dbReference type="GO" id="GO:0007602">
    <property type="term" value="P:phototransduction"/>
    <property type="evidence" value="ECO:0000304"/>
    <property type="project" value="UniProtKB"/>
</dbReference>
<dbReference type="GO" id="GO:0007601">
    <property type="term" value="P:visual perception"/>
    <property type="evidence" value="ECO:0007669"/>
    <property type="project" value="InterPro"/>
</dbReference>
<dbReference type="FunFam" id="1.20.1070.10:FF:000588">
    <property type="entry name" value="Go opsin"/>
    <property type="match status" value="1"/>
</dbReference>
<dbReference type="Gene3D" id="1.20.1070.10">
    <property type="entry name" value="Rhodopsin 7-helix transmembrane proteins"/>
    <property type="match status" value="1"/>
</dbReference>
<dbReference type="InterPro" id="IPR050125">
    <property type="entry name" value="GPCR_opsins"/>
</dbReference>
<dbReference type="InterPro" id="IPR000276">
    <property type="entry name" value="GPCR_Rhodpsn"/>
</dbReference>
<dbReference type="InterPro" id="IPR017452">
    <property type="entry name" value="GPCR_Rhodpsn_7TM"/>
</dbReference>
<dbReference type="InterPro" id="IPR001760">
    <property type="entry name" value="Opsin"/>
</dbReference>
<dbReference type="PANTHER" id="PTHR24240">
    <property type="entry name" value="OPSIN"/>
    <property type="match status" value="1"/>
</dbReference>
<dbReference type="Pfam" id="PF00001">
    <property type="entry name" value="7tm_1"/>
    <property type="match status" value="1"/>
</dbReference>
<dbReference type="PRINTS" id="PR00237">
    <property type="entry name" value="GPCRRHODOPSN"/>
</dbReference>
<dbReference type="PRINTS" id="PR00238">
    <property type="entry name" value="OPSIN"/>
</dbReference>
<dbReference type="SMART" id="SM01381">
    <property type="entry name" value="7TM_GPCR_Srsx"/>
    <property type="match status" value="1"/>
</dbReference>
<dbReference type="SUPFAM" id="SSF81321">
    <property type="entry name" value="Family A G protein-coupled receptor-like"/>
    <property type="match status" value="1"/>
</dbReference>
<dbReference type="PROSITE" id="PS00237">
    <property type="entry name" value="G_PROTEIN_RECEP_F1_1"/>
    <property type="match status" value="1"/>
</dbReference>
<dbReference type="PROSITE" id="PS50262">
    <property type="entry name" value="G_PROTEIN_RECEP_F1_2"/>
    <property type="match status" value="1"/>
</dbReference>
<proteinExistence type="evidence at protein level"/>
<comment type="function">
    <text evidence="7">Photoreceptor implicated in non-image-forming responses to light. Photoisomerizes covalently bound all-trans retinal back to 11-cis retinal. Most likely coupled to the G(q) signaling cascade.</text>
</comment>
<comment type="biophysicochemical properties">
    <absorption>
        <max evidence="7">485 nm</max>
    </absorption>
</comment>
<comment type="subcellular location">
    <subcellularLocation>
        <location evidence="3">Cell membrane</location>
        <topology evidence="4">Multi-pass membrane protein</topology>
    </subcellularLocation>
</comment>
<comment type="tissue specificity">
    <text evidence="7">Expressed in Joseph cells and photoreceptor cells of the dorsal ocelli.</text>
</comment>
<comment type="similarity">
    <text evidence="5">Belongs to the G-protein coupled receptor 1 family. Opsin subfamily.</text>
</comment>
<keyword id="KW-1003">Cell membrane</keyword>
<keyword id="KW-0157">Chromophore</keyword>
<keyword id="KW-1015">Disulfide bond</keyword>
<keyword id="KW-0297">G-protein coupled receptor</keyword>
<keyword id="KW-0325">Glycoprotein</keyword>
<keyword id="KW-0472">Membrane</keyword>
<keyword id="KW-0600">Photoreceptor protein</keyword>
<keyword id="KW-0675">Receptor</keyword>
<keyword id="KW-1185">Reference proteome</keyword>
<keyword id="KW-0681">Retinal protein</keyword>
<keyword id="KW-0716">Sensory transduction</keyword>
<keyword id="KW-0807">Transducer</keyword>
<keyword id="KW-0812">Transmembrane</keyword>
<keyword id="KW-1133">Transmembrane helix</keyword>
<reference evidence="8 9" key="1">
    <citation type="journal article" date="2005" name="Curr. Biol.">
        <title>Cephalochordate melanopsin: evolutionary linkage between invertebrate visual cells and vertebrate photosensitive retinal ganglion cells.</title>
        <authorList>
            <person name="Koyanagi M."/>
            <person name="Kubokawa K."/>
            <person name="Tsukamoto H."/>
            <person name="Shichida Y."/>
            <person name="Terakita A."/>
        </authorList>
    </citation>
    <scope>NUCLEOTIDE SEQUENCE [MRNA]</scope>
    <scope>FUNCTION</scope>
    <scope>BIOPHYSICOCHEMICAL PROPERTIES</scope>
    <scope>TISSUE SPECIFICITY</scope>
</reference>
<feature type="chain" id="PRO_0000270993" description="Melanopsin">
    <location>
        <begin position="1"/>
        <end position="706"/>
    </location>
</feature>
<feature type="topological domain" description="Extracellular" evidence="4">
    <location>
        <begin position="1"/>
        <end position="86"/>
    </location>
</feature>
<feature type="transmembrane region" description="Helical; Name=1" evidence="4">
    <location>
        <begin position="87"/>
        <end position="107"/>
    </location>
</feature>
<feature type="topological domain" description="Cytoplasmic" evidence="4">
    <location>
        <begin position="108"/>
        <end position="121"/>
    </location>
</feature>
<feature type="transmembrane region" description="Helical; Name=2" evidence="4">
    <location>
        <begin position="122"/>
        <end position="142"/>
    </location>
</feature>
<feature type="topological domain" description="Extracellular" evidence="4">
    <location>
        <begin position="143"/>
        <end position="159"/>
    </location>
</feature>
<feature type="transmembrane region" description="Helical; Name=3" evidence="4">
    <location>
        <begin position="160"/>
        <end position="180"/>
    </location>
</feature>
<feature type="topological domain" description="Cytoplasmic" evidence="4">
    <location>
        <begin position="181"/>
        <end position="201"/>
    </location>
</feature>
<feature type="transmembrane region" description="Helical; Name=4" evidence="4">
    <location>
        <begin position="202"/>
        <end position="222"/>
    </location>
</feature>
<feature type="topological domain" description="Extracellular" evidence="4">
    <location>
        <begin position="223"/>
        <end position="248"/>
    </location>
</feature>
<feature type="transmembrane region" description="Helical; Name=5" evidence="4">
    <location>
        <begin position="249"/>
        <end position="269"/>
    </location>
</feature>
<feature type="topological domain" description="Cytoplasmic" evidence="4">
    <location>
        <begin position="270"/>
        <end position="314"/>
    </location>
</feature>
<feature type="transmembrane region" description="Helical; Name=6" evidence="4">
    <location>
        <begin position="315"/>
        <end position="335"/>
    </location>
</feature>
<feature type="topological domain" description="Extracellular" evidence="4">
    <location>
        <begin position="336"/>
        <end position="351"/>
    </location>
</feature>
<feature type="transmembrane region" description="Helical; Name=7" evidence="4">
    <location>
        <begin position="352"/>
        <end position="372"/>
    </location>
</feature>
<feature type="topological domain" description="Cytoplasmic" evidence="4">
    <location>
        <begin position="373"/>
        <end position="706"/>
    </location>
</feature>
<feature type="region of interest" description="Disordered" evidence="6">
    <location>
        <begin position="393"/>
        <end position="446"/>
    </location>
</feature>
<feature type="region of interest" description="Disordered" evidence="6">
    <location>
        <begin position="571"/>
        <end position="599"/>
    </location>
</feature>
<feature type="region of interest" description="Disordered" evidence="6">
    <location>
        <begin position="630"/>
        <end position="658"/>
    </location>
</feature>
<feature type="compositionally biased region" description="Low complexity" evidence="6">
    <location>
        <begin position="404"/>
        <end position="418"/>
    </location>
</feature>
<feature type="compositionally biased region" description="Low complexity" evidence="6">
    <location>
        <begin position="426"/>
        <end position="442"/>
    </location>
</feature>
<feature type="compositionally biased region" description="Basic and acidic residues" evidence="6">
    <location>
        <begin position="571"/>
        <end position="593"/>
    </location>
</feature>
<feature type="compositionally biased region" description="Acidic residues" evidence="6">
    <location>
        <begin position="645"/>
        <end position="658"/>
    </location>
</feature>
<feature type="modified residue" description="N6-(retinylidene)lysine" evidence="1">
    <location>
        <position position="358"/>
    </location>
</feature>
<feature type="glycosylation site" description="N-linked (GlcNAc...) asparagine" evidence="4">
    <location>
        <position position="12"/>
    </location>
</feature>
<feature type="glycosylation site" description="N-linked (GlcNAc...) asparagine" evidence="4">
    <location>
        <position position="64"/>
    </location>
</feature>
<feature type="glycosylation site" description="N-linked (GlcNAc...) asparagine" evidence="4">
    <location>
        <position position="69"/>
    </location>
</feature>
<feature type="disulfide bond" evidence="5">
    <location>
        <begin position="158"/>
        <end position="236"/>
    </location>
</feature>
<accession>Q4R1I4</accession>